<organism>
    <name type="scientific">Staphylococcus aureus (strain MRSA252)</name>
    <dbReference type="NCBI Taxonomy" id="282458"/>
    <lineage>
        <taxon>Bacteria</taxon>
        <taxon>Bacillati</taxon>
        <taxon>Bacillota</taxon>
        <taxon>Bacilli</taxon>
        <taxon>Bacillales</taxon>
        <taxon>Staphylococcaceae</taxon>
        <taxon>Staphylococcus</taxon>
    </lineage>
</organism>
<sequence>MKLQTTYPSNNYPIFVEHGAIDHISTYIDQFDQSFILIDEHVNQYFADKFNDILSYENVHKVIIPAGEKTKTFEQYQETLEYILSHHVTRNTAIIAVGGGATGDFAGFVAATLLRGVHFIQVPTTILAHDSSVGGKVGINSKQGKNLIGAFYRPTAVIYDLDFLKTLPFEQILSGYAEVYKHALLNGESATQDIEQHFKDREILQSLKGMDKYIAKGIETKLDIVVADEKEQGVRKFLNLGHTFGHAVEYYHKIPHGHAVMVGIIYQFIVANALFDSKHDINHYIQYLIQLGYPLDMITDLDFETLYQYMLSDKKNDKQGVQMVLIRQFGDIVVQHVDQLTLQHACEQLKTYFK</sequence>
<proteinExistence type="evidence at protein level"/>
<keyword id="KW-0002">3D-structure</keyword>
<keyword id="KW-0028">Amino-acid biosynthesis</keyword>
<keyword id="KW-0057">Aromatic amino acid biosynthesis</keyword>
<keyword id="KW-0170">Cobalt</keyword>
<keyword id="KW-0963">Cytoplasm</keyword>
<keyword id="KW-0456">Lyase</keyword>
<keyword id="KW-0479">Metal-binding</keyword>
<keyword id="KW-0520">NAD</keyword>
<keyword id="KW-0547">Nucleotide-binding</keyword>
<keyword id="KW-0862">Zinc</keyword>
<protein>
    <recommendedName>
        <fullName evidence="1 3">3-dehydroquinate synthase</fullName>
        <shortName evidence="1 3">DHQS</shortName>
        <ecNumber evidence="1">4.2.3.4</ecNumber>
    </recommendedName>
</protein>
<name>AROB_STAAR</name>
<gene>
    <name evidence="1" type="primary">aroB</name>
    <name type="ordered locus">SAR1476</name>
</gene>
<evidence type="ECO:0000255" key="1">
    <source>
        <dbReference type="HAMAP-Rule" id="MF_00110"/>
    </source>
</evidence>
<evidence type="ECO:0000269" key="2">
    <source>
    </source>
</evidence>
<evidence type="ECO:0000303" key="3">
    <source>
    </source>
</evidence>
<evidence type="ECO:0007744" key="4">
    <source>
        <dbReference type="PDB" id="1XAG"/>
    </source>
</evidence>
<evidence type="ECO:0007744" key="5">
    <source>
        <dbReference type="PDB" id="1XAH"/>
    </source>
</evidence>
<evidence type="ECO:0007744" key="6">
    <source>
        <dbReference type="PDB" id="1XAI"/>
    </source>
</evidence>
<evidence type="ECO:0007744" key="7">
    <source>
        <dbReference type="PDB" id="1XAJ"/>
    </source>
</evidence>
<evidence type="ECO:0007744" key="8">
    <source>
        <dbReference type="PDB" id="1XAL"/>
    </source>
</evidence>
<evidence type="ECO:0007829" key="9">
    <source>
        <dbReference type="PDB" id="1XAG"/>
    </source>
</evidence>
<evidence type="ECO:0007829" key="10">
    <source>
        <dbReference type="PDB" id="1XAH"/>
    </source>
</evidence>
<evidence type="ECO:0007829" key="11">
    <source>
        <dbReference type="PDB" id="1XAI"/>
    </source>
</evidence>
<evidence type="ECO:0007829" key="12">
    <source>
        <dbReference type="PDB" id="1XAJ"/>
    </source>
</evidence>
<feature type="chain" id="PRO_0000140782" description="3-dehydroquinate synthase">
    <location>
        <begin position="1"/>
        <end position="354"/>
    </location>
</feature>
<feature type="binding site" evidence="2 5 7 8">
    <location>
        <position position="39"/>
    </location>
    <ligand>
        <name>NAD(+)</name>
        <dbReference type="ChEBI" id="CHEBI:57540"/>
    </ligand>
</feature>
<feature type="binding site" evidence="2 5 8">
    <location>
        <position position="45"/>
    </location>
    <ligand>
        <name>NAD(+)</name>
        <dbReference type="ChEBI" id="CHEBI:57540"/>
    </ligand>
</feature>
<feature type="binding site" evidence="2 5 7 8">
    <location>
        <begin position="68"/>
        <end position="71"/>
    </location>
    <ligand>
        <name>NAD(+)</name>
        <dbReference type="ChEBI" id="CHEBI:57540"/>
    </ligand>
</feature>
<feature type="binding site" evidence="1 2 5 7 8">
    <location>
        <begin position="100"/>
        <end position="104"/>
    </location>
    <ligand>
        <name>NAD(+)</name>
        <dbReference type="ChEBI" id="CHEBI:57540"/>
    </ligand>
</feature>
<feature type="binding site" evidence="1 2 5 7 8">
    <location>
        <begin position="124"/>
        <end position="125"/>
    </location>
    <ligand>
        <name>NAD(+)</name>
        <dbReference type="ChEBI" id="CHEBI:57540"/>
    </ligand>
</feature>
<feature type="binding site" evidence="1 2 5 7 8">
    <location>
        <position position="136"/>
    </location>
    <ligand>
        <name>NAD(+)</name>
        <dbReference type="ChEBI" id="CHEBI:57540"/>
    </ligand>
</feature>
<feature type="binding site" evidence="1 2 5 7 8">
    <location>
        <position position="145"/>
    </location>
    <ligand>
        <name>NAD(+)</name>
        <dbReference type="ChEBI" id="CHEBI:57540"/>
    </ligand>
</feature>
<feature type="binding site" evidence="1 2 5 7 8">
    <location>
        <begin position="163"/>
        <end position="166"/>
    </location>
    <ligand>
        <name>NAD(+)</name>
        <dbReference type="ChEBI" id="CHEBI:57540"/>
    </ligand>
</feature>
<feature type="binding site" evidence="1 2 6">
    <location>
        <position position="178"/>
    </location>
    <ligand>
        <name>Zn(2+)</name>
        <dbReference type="ChEBI" id="CHEBI:29105"/>
    </ligand>
</feature>
<feature type="binding site" evidence="1 2 6">
    <location>
        <position position="242"/>
    </location>
    <ligand>
        <name>Zn(2+)</name>
        <dbReference type="ChEBI" id="CHEBI:29105"/>
    </ligand>
</feature>
<feature type="binding site" evidence="1 2 6">
    <location>
        <position position="256"/>
    </location>
    <ligand>
        <name>Zn(2+)</name>
        <dbReference type="ChEBI" id="CHEBI:29105"/>
    </ligand>
</feature>
<feature type="strand" evidence="10">
    <location>
        <begin position="2"/>
        <end position="4"/>
    </location>
</feature>
<feature type="strand" evidence="11">
    <location>
        <begin position="8"/>
        <end position="10"/>
    </location>
</feature>
<feature type="strand" evidence="10">
    <location>
        <begin position="13"/>
        <end position="17"/>
    </location>
</feature>
<feature type="helix" evidence="10">
    <location>
        <begin position="20"/>
        <end position="22"/>
    </location>
</feature>
<feature type="helix" evidence="10">
    <location>
        <begin position="23"/>
        <end position="28"/>
    </location>
</feature>
<feature type="strand" evidence="10">
    <location>
        <begin position="34"/>
        <end position="39"/>
    </location>
</feature>
<feature type="helix" evidence="10">
    <location>
        <begin position="40"/>
        <end position="50"/>
    </location>
</feature>
<feature type="turn" evidence="9">
    <location>
        <begin position="52"/>
        <end position="55"/>
    </location>
</feature>
<feature type="strand" evidence="10">
    <location>
        <begin position="59"/>
        <end position="64"/>
    </location>
</feature>
<feature type="helix" evidence="10">
    <location>
        <begin position="67"/>
        <end position="70"/>
    </location>
</feature>
<feature type="helix" evidence="10">
    <location>
        <begin position="73"/>
        <end position="84"/>
    </location>
</feature>
<feature type="turn" evidence="12">
    <location>
        <begin position="85"/>
        <end position="87"/>
    </location>
</feature>
<feature type="strand" evidence="10">
    <location>
        <begin position="93"/>
        <end position="99"/>
    </location>
</feature>
<feature type="helix" evidence="10">
    <location>
        <begin position="100"/>
        <end position="112"/>
    </location>
</feature>
<feature type="helix" evidence="9">
    <location>
        <begin position="113"/>
        <end position="115"/>
    </location>
</feature>
<feature type="strand" evidence="10">
    <location>
        <begin position="118"/>
        <end position="123"/>
    </location>
</feature>
<feature type="helix" evidence="10">
    <location>
        <begin position="128"/>
        <end position="131"/>
    </location>
</feature>
<feature type="strand" evidence="10">
    <location>
        <begin position="136"/>
        <end position="139"/>
    </location>
</feature>
<feature type="strand" evidence="10">
    <location>
        <begin position="142"/>
        <end position="144"/>
    </location>
</feature>
<feature type="strand" evidence="10">
    <location>
        <begin position="148"/>
        <end position="151"/>
    </location>
</feature>
<feature type="strand" evidence="10">
    <location>
        <begin position="155"/>
        <end position="160"/>
    </location>
</feature>
<feature type="helix" evidence="10">
    <location>
        <begin position="161"/>
        <end position="166"/>
    </location>
</feature>
<feature type="helix" evidence="10">
    <location>
        <begin position="169"/>
        <end position="186"/>
    </location>
</feature>
<feature type="helix" evidence="10">
    <location>
        <begin position="188"/>
        <end position="197"/>
    </location>
</feature>
<feature type="helix" evidence="10">
    <location>
        <begin position="201"/>
        <end position="206"/>
    </location>
</feature>
<feature type="turn" evidence="10">
    <location>
        <begin position="207"/>
        <end position="209"/>
    </location>
</feature>
<feature type="helix" evidence="10">
    <location>
        <begin position="210"/>
        <end position="227"/>
    </location>
</feature>
<feature type="turn" evidence="11">
    <location>
        <begin position="228"/>
        <end position="230"/>
    </location>
</feature>
<feature type="strand" evidence="10">
    <location>
        <begin position="231"/>
        <end position="233"/>
    </location>
</feature>
<feature type="helix" evidence="10">
    <location>
        <begin position="234"/>
        <end position="239"/>
    </location>
</feature>
<feature type="turn" evidence="10">
    <location>
        <begin position="240"/>
        <end position="242"/>
    </location>
</feature>
<feature type="helix" evidence="10">
    <location>
        <begin position="243"/>
        <end position="252"/>
    </location>
</feature>
<feature type="helix" evidence="10">
    <location>
        <begin position="256"/>
        <end position="274"/>
    </location>
</feature>
<feature type="helix" evidence="10">
    <location>
        <begin position="281"/>
        <end position="291"/>
    </location>
</feature>
<feature type="helix" evidence="11">
    <location>
        <begin position="297"/>
        <end position="300"/>
    </location>
</feature>
<feature type="helix" evidence="10">
    <location>
        <begin position="306"/>
        <end position="308"/>
    </location>
</feature>
<feature type="turn" evidence="11">
    <location>
        <begin position="310"/>
        <end position="312"/>
    </location>
</feature>
<feature type="strand" evidence="10">
    <location>
        <begin position="324"/>
        <end position="328"/>
    </location>
</feature>
<feature type="strand" evidence="10">
    <location>
        <begin position="331"/>
        <end position="334"/>
    </location>
</feature>
<feature type="helix" evidence="10">
    <location>
        <begin position="339"/>
        <end position="351"/>
    </location>
</feature>
<accession>Q6GGU4</accession>
<reference key="1">
    <citation type="journal article" date="2004" name="Proc. Natl. Acad. Sci. U.S.A.">
        <title>Complete genomes of two clinical Staphylococcus aureus strains: evidence for the rapid evolution of virulence and drug resistance.</title>
        <authorList>
            <person name="Holden M.T.G."/>
            <person name="Feil E.J."/>
            <person name="Lindsay J.A."/>
            <person name="Peacock S.J."/>
            <person name="Day N.P.J."/>
            <person name="Enright M.C."/>
            <person name="Foster T.J."/>
            <person name="Moore C.E."/>
            <person name="Hurst L."/>
            <person name="Atkin R."/>
            <person name="Barron A."/>
            <person name="Bason N."/>
            <person name="Bentley S.D."/>
            <person name="Chillingworth C."/>
            <person name="Chillingworth T."/>
            <person name="Churcher C."/>
            <person name="Clark L."/>
            <person name="Corton C."/>
            <person name="Cronin A."/>
            <person name="Doggett J."/>
            <person name="Dowd L."/>
            <person name="Feltwell T."/>
            <person name="Hance Z."/>
            <person name="Harris B."/>
            <person name="Hauser H."/>
            <person name="Holroyd S."/>
            <person name="Jagels K."/>
            <person name="James K.D."/>
            <person name="Lennard N."/>
            <person name="Line A."/>
            <person name="Mayes R."/>
            <person name="Moule S."/>
            <person name="Mungall K."/>
            <person name="Ormond D."/>
            <person name="Quail M.A."/>
            <person name="Rabbinowitsch E."/>
            <person name="Rutherford K.M."/>
            <person name="Sanders M."/>
            <person name="Sharp S."/>
            <person name="Simmonds M."/>
            <person name="Stevens K."/>
            <person name="Whitehead S."/>
            <person name="Barrell B.G."/>
            <person name="Spratt B.G."/>
            <person name="Parkhill J."/>
        </authorList>
    </citation>
    <scope>NUCLEOTIDE SEQUENCE [LARGE SCALE GENOMIC DNA]</scope>
    <source>
        <strain>MRSA252</strain>
    </source>
</reference>
<reference evidence="4 5 6 7 8" key="2">
    <citation type="journal article" date="2004" name="J. Mol. Biol.">
        <title>Comparison of ligand-induced conformational changes and domain closure mechanisms, between prokaryotic and eukaryotic dehydroquinate synthases.</title>
        <authorList>
            <person name="Nichols C.E."/>
            <person name="Ren J."/>
            <person name="Leslie K."/>
            <person name="Dhaliwal B."/>
            <person name="Lockyer M."/>
            <person name="Charles I."/>
            <person name="Hawkins A.R."/>
            <person name="Stammers D.K."/>
        </authorList>
    </citation>
    <scope>X-RAY CRYSTALLOGRAPHY (2.20 ANGSTROMS) IN COMPLEXES WITH NAD AND ZINC</scope>
</reference>
<dbReference type="EC" id="4.2.3.4" evidence="1"/>
<dbReference type="EMBL" id="BX571856">
    <property type="protein sequence ID" value="CAG40474.1"/>
    <property type="molecule type" value="Genomic_DNA"/>
</dbReference>
<dbReference type="RefSeq" id="WP_000776318.1">
    <property type="nucleotide sequence ID" value="NC_002952.2"/>
</dbReference>
<dbReference type="PDB" id="1XAG">
    <property type="method" value="X-ray"/>
    <property type="resolution" value="2.45 A"/>
    <property type="chains" value="A=1-354"/>
</dbReference>
<dbReference type="PDB" id="1XAH">
    <property type="method" value="X-ray"/>
    <property type="resolution" value="2.20 A"/>
    <property type="chains" value="A/B=1-354"/>
</dbReference>
<dbReference type="PDB" id="1XAI">
    <property type="method" value="X-ray"/>
    <property type="resolution" value="2.30 A"/>
    <property type="chains" value="A/B=1-354"/>
</dbReference>
<dbReference type="PDB" id="1XAJ">
    <property type="method" value="X-ray"/>
    <property type="resolution" value="2.35 A"/>
    <property type="chains" value="A/B=1-354"/>
</dbReference>
<dbReference type="PDB" id="1XAL">
    <property type="method" value="X-ray"/>
    <property type="resolution" value="2.80 A"/>
    <property type="chains" value="A/B=1-354"/>
</dbReference>
<dbReference type="PDBsum" id="1XAG"/>
<dbReference type="PDBsum" id="1XAH"/>
<dbReference type="PDBsum" id="1XAI"/>
<dbReference type="PDBsum" id="1XAJ"/>
<dbReference type="PDBsum" id="1XAL"/>
<dbReference type="PCDDB" id="Q6GGU4"/>
<dbReference type="SMR" id="Q6GGU4"/>
<dbReference type="DrugBank" id="DB02592">
    <property type="generic name" value="Carbaphosphonate"/>
</dbReference>
<dbReference type="KEGG" id="sar:SAR1476"/>
<dbReference type="HOGENOM" id="CLU_001201_0_1_9"/>
<dbReference type="BRENDA" id="4.2.3.4">
    <property type="organism ID" value="3352"/>
</dbReference>
<dbReference type="UniPathway" id="UPA00053">
    <property type="reaction ID" value="UER00085"/>
</dbReference>
<dbReference type="EvolutionaryTrace" id="Q6GGU4"/>
<dbReference type="Proteomes" id="UP000000596">
    <property type="component" value="Chromosome"/>
</dbReference>
<dbReference type="GO" id="GO:0005737">
    <property type="term" value="C:cytoplasm"/>
    <property type="evidence" value="ECO:0007669"/>
    <property type="project" value="UniProtKB-SubCell"/>
</dbReference>
<dbReference type="GO" id="GO:0003856">
    <property type="term" value="F:3-dehydroquinate synthase activity"/>
    <property type="evidence" value="ECO:0007669"/>
    <property type="project" value="UniProtKB-UniRule"/>
</dbReference>
<dbReference type="GO" id="GO:0046872">
    <property type="term" value="F:metal ion binding"/>
    <property type="evidence" value="ECO:0007669"/>
    <property type="project" value="UniProtKB-KW"/>
</dbReference>
<dbReference type="GO" id="GO:0000166">
    <property type="term" value="F:nucleotide binding"/>
    <property type="evidence" value="ECO:0007669"/>
    <property type="project" value="UniProtKB-KW"/>
</dbReference>
<dbReference type="GO" id="GO:0008652">
    <property type="term" value="P:amino acid biosynthetic process"/>
    <property type="evidence" value="ECO:0007669"/>
    <property type="project" value="UniProtKB-KW"/>
</dbReference>
<dbReference type="GO" id="GO:0009073">
    <property type="term" value="P:aromatic amino acid family biosynthetic process"/>
    <property type="evidence" value="ECO:0007669"/>
    <property type="project" value="UniProtKB-KW"/>
</dbReference>
<dbReference type="GO" id="GO:0009423">
    <property type="term" value="P:chorismate biosynthetic process"/>
    <property type="evidence" value="ECO:0007669"/>
    <property type="project" value="UniProtKB-UniRule"/>
</dbReference>
<dbReference type="FunFam" id="3.40.50.1970:FF:000019">
    <property type="entry name" value="3-dehydroquinate synthase"/>
    <property type="match status" value="1"/>
</dbReference>
<dbReference type="Gene3D" id="3.40.50.1970">
    <property type="match status" value="1"/>
</dbReference>
<dbReference type="Gene3D" id="1.20.1090.10">
    <property type="entry name" value="Dehydroquinate synthase-like - alpha domain"/>
    <property type="match status" value="1"/>
</dbReference>
<dbReference type="HAMAP" id="MF_00110">
    <property type="entry name" value="DHQ_synthase"/>
    <property type="match status" value="1"/>
</dbReference>
<dbReference type="InterPro" id="IPR050071">
    <property type="entry name" value="Dehydroquinate_synthase"/>
</dbReference>
<dbReference type="InterPro" id="IPR016037">
    <property type="entry name" value="DHQ_synth_AroB"/>
</dbReference>
<dbReference type="InterPro" id="IPR030963">
    <property type="entry name" value="DHQ_synth_fam"/>
</dbReference>
<dbReference type="InterPro" id="IPR030960">
    <property type="entry name" value="DHQS/DOIS_N"/>
</dbReference>
<dbReference type="InterPro" id="IPR056179">
    <property type="entry name" value="DHQS_C"/>
</dbReference>
<dbReference type="NCBIfam" id="TIGR01357">
    <property type="entry name" value="aroB"/>
    <property type="match status" value="1"/>
</dbReference>
<dbReference type="PANTHER" id="PTHR43622">
    <property type="entry name" value="3-DEHYDROQUINATE SYNTHASE"/>
    <property type="match status" value="1"/>
</dbReference>
<dbReference type="PANTHER" id="PTHR43622:SF7">
    <property type="entry name" value="3-DEHYDROQUINATE SYNTHASE, CHLOROPLASTIC"/>
    <property type="match status" value="1"/>
</dbReference>
<dbReference type="Pfam" id="PF01761">
    <property type="entry name" value="DHQ_synthase"/>
    <property type="match status" value="1"/>
</dbReference>
<dbReference type="Pfam" id="PF24621">
    <property type="entry name" value="DHQS_C"/>
    <property type="match status" value="1"/>
</dbReference>
<dbReference type="PIRSF" id="PIRSF001455">
    <property type="entry name" value="DHQ_synth"/>
    <property type="match status" value="1"/>
</dbReference>
<dbReference type="SUPFAM" id="SSF56796">
    <property type="entry name" value="Dehydroquinate synthase-like"/>
    <property type="match status" value="1"/>
</dbReference>
<comment type="function">
    <text evidence="1">Catalyzes the conversion of 3-deoxy-D-arabino-heptulosonate 7-phosphate (DAHP) to dehydroquinate (DHQ).</text>
</comment>
<comment type="catalytic activity">
    <reaction evidence="1">
        <text>7-phospho-2-dehydro-3-deoxy-D-arabino-heptonate = 3-dehydroquinate + phosphate</text>
        <dbReference type="Rhea" id="RHEA:21968"/>
        <dbReference type="ChEBI" id="CHEBI:32364"/>
        <dbReference type="ChEBI" id="CHEBI:43474"/>
        <dbReference type="ChEBI" id="CHEBI:58394"/>
        <dbReference type="EC" id="4.2.3.4"/>
    </reaction>
</comment>
<comment type="cofactor">
    <cofactor evidence="1">
        <name>NAD(+)</name>
        <dbReference type="ChEBI" id="CHEBI:57540"/>
    </cofactor>
</comment>
<comment type="cofactor">
    <cofactor evidence="1">
        <name>Co(2+)</name>
        <dbReference type="ChEBI" id="CHEBI:48828"/>
    </cofactor>
    <cofactor evidence="1">
        <name>Zn(2+)</name>
        <dbReference type="ChEBI" id="CHEBI:29105"/>
    </cofactor>
    <text evidence="1">Binds 1 divalent metal cation per subunit. Can use either Co(2+) or Zn(2+).</text>
</comment>
<comment type="pathway">
    <text evidence="1">Metabolic intermediate biosynthesis; chorismate biosynthesis; chorismate from D-erythrose 4-phosphate and phosphoenolpyruvate: step 2/7.</text>
</comment>
<comment type="subcellular location">
    <subcellularLocation>
        <location evidence="1">Cytoplasm</location>
    </subcellularLocation>
</comment>
<comment type="similarity">
    <text evidence="1">Belongs to the sugar phosphate cyclases superfamily. Dehydroquinate synthase family.</text>
</comment>